<comment type="function">
    <text evidence="1">Receptor for a number of inflammatory CC-chemokines including CCL3/MIP-1-alpha, CCL4/MIP-1-beta and RANTES and subsequently transduces a signal by increasing the intracellular calcium ion level. May play a role in the control of granulocytic lineage proliferation or differentiation. Participates in T-lymphocyte migration to the infection site by acting as a chemotactic receptor.</text>
</comment>
<comment type="subunit">
    <text evidence="1">Interacts with PRAF2. Efficient ligand binding to CCL3/MIP-1alpha and CCL4/MIP-1beta requires sulfation, O-glycosylation and sialic acid modifications. Glycosylation on Ser-6 is required for efficient binding of CCL4. Interacts with GRK2. Interacts with ARRB1 and ARRB2. Interacts with CNIH4. Interacts with S100A4; this interaction stimulates T-lymphocyte chemotaxis.</text>
</comment>
<comment type="subcellular location">
    <subcellularLocation>
        <location evidence="2">Cell membrane</location>
        <topology evidence="2">Multi-pass membrane protein</topology>
    </subcellularLocation>
</comment>
<comment type="PTM">
    <text evidence="1">Sulfated on at least 2 of the N-terminal tyrosines. Sulfation is required for efficient binding of the chemokines, CCL3 and CCL4 (By similarity).</text>
</comment>
<comment type="PTM">
    <text evidence="1">Palmitoylation in the C-terminal is important for cell surface expression.</text>
</comment>
<comment type="PTM">
    <text evidence="1">Phosphorylation on serine residues in the C-terminal is stimulated by binding CC chemokines especially by APO-RANTES.</text>
</comment>
<comment type="PTM">
    <text evidence="1">O-glycosylated, but not N-glycosylated. Ser-6 appears to be the major site even if Ser-7 may be also O-glycosylated. Also sialylated glycans present which contribute to chemokine binding. Thr-16 and Ser-17 may also be glycosylated and, if so, with small moieties such as a T-antigen.</text>
</comment>
<comment type="similarity">
    <text evidence="4">Belongs to the G-protein coupled receptor 1 family.</text>
</comment>
<keyword id="KW-1003">Cell membrane</keyword>
<keyword id="KW-1015">Disulfide bond</keyword>
<keyword id="KW-0297">G-protein coupled receptor</keyword>
<keyword id="KW-0325">Glycoprotein</keyword>
<keyword id="KW-0449">Lipoprotein</keyword>
<keyword id="KW-0472">Membrane</keyword>
<keyword id="KW-0564">Palmitate</keyword>
<keyword id="KW-0597">Phosphoprotein</keyword>
<keyword id="KW-0675">Receptor</keyword>
<keyword id="KW-0765">Sulfation</keyword>
<keyword id="KW-0807">Transducer</keyword>
<keyword id="KW-0812">Transmembrane</keyword>
<keyword id="KW-1133">Transmembrane helix</keyword>
<sequence>MDYQVSSPTYDIDYYTSEPCQKINVKQIAARLLPPLYSLVFIFGFVGNILVVLILINCKRLKSMTDIYLLNLAISDLLFLLTVPFWAHYAAAQWDFGNTMCQLLTGLYFIGFFSGIFFIILLTIDRYLAIVHAVFALKARTVTFGVVTSVITWVVAVFASLPGIIFTRSQREGLHYTCSSHFPYSQYQFWKNFQTLKIVILGLVLPLLVMVICYSGILKTLLRCRNEKKRHRAVRLIFTIMIVYFLFWAPYNIVLLLNTFQEFFGLNNCSSSNRLDQAMQVTETLGMTHCCINPIIYAFVGEKFRNYLLVFFQKHIAKRFCKCCSIFQQEASERASSVYTRSTGEQEISVGL</sequence>
<gene>
    <name type="primary">CCR5</name>
    <name type="synonym">CMKBR5</name>
</gene>
<reference key="1">
    <citation type="journal article" date="1999" name="AIDS Res. Hum. Retroviruses">
        <title>Mutations in CCR5-coding sequences are not associated with SIV carrier status in African nonhuman primates.</title>
        <authorList>
            <person name="Mueller-Trutwin M.-C."/>
            <person name="Corbet S."/>
            <person name="Hansen J."/>
            <person name="Georges-Courbot M.-C."/>
            <person name="Diop O."/>
            <person name="Rigoulet J."/>
            <person name="Barre-Sinoussi F."/>
            <person name="Fomsgaard A."/>
        </authorList>
    </citation>
    <scope>NUCLEOTIDE SEQUENCE [GENOMIC DNA]</scope>
</reference>
<reference key="2">
    <citation type="journal article" date="1999" name="Mol. Biol. Evol.">
        <title>Sequence evolution of the CCR5 chemokine receptor gene in primates.</title>
        <authorList>
            <person name="Zhang Y.-W."/>
            <person name="Ryder O.A."/>
            <person name="Zhang Y.-P."/>
        </authorList>
    </citation>
    <scope>NUCLEOTIDE SEQUENCE [GENOMIC DNA]</scope>
</reference>
<evidence type="ECO:0000250" key="1">
    <source>
        <dbReference type="UniProtKB" id="P51681"/>
    </source>
</evidence>
<evidence type="ECO:0000250" key="2">
    <source>
        <dbReference type="UniProtKB" id="Q9XT76"/>
    </source>
</evidence>
<evidence type="ECO:0000255" key="3"/>
<evidence type="ECO:0000255" key="4">
    <source>
        <dbReference type="PROSITE-ProRule" id="PRU00521"/>
    </source>
</evidence>
<organism>
    <name type="scientific">Cercocebus galeritus</name>
    <name type="common">Tana river mangabey</name>
    <dbReference type="NCBI Taxonomy" id="9532"/>
    <lineage>
        <taxon>Eukaryota</taxon>
        <taxon>Metazoa</taxon>
        <taxon>Chordata</taxon>
        <taxon>Craniata</taxon>
        <taxon>Vertebrata</taxon>
        <taxon>Euteleostomi</taxon>
        <taxon>Mammalia</taxon>
        <taxon>Eutheria</taxon>
        <taxon>Euarchontoglires</taxon>
        <taxon>Primates</taxon>
        <taxon>Haplorrhini</taxon>
        <taxon>Catarrhini</taxon>
        <taxon>Cercopithecidae</taxon>
        <taxon>Cercopithecinae</taxon>
        <taxon>Cercocebus</taxon>
    </lineage>
</organism>
<proteinExistence type="inferred from homology"/>
<dbReference type="EMBL" id="AF035215">
    <property type="protein sequence ID" value="AAD44008.1"/>
    <property type="molecule type" value="Genomic_DNA"/>
</dbReference>
<dbReference type="EMBL" id="AF177898">
    <property type="protein sequence ID" value="AAK43381.1"/>
    <property type="molecule type" value="Genomic_DNA"/>
</dbReference>
<dbReference type="SMR" id="Q9TV49"/>
<dbReference type="GlyCosmos" id="Q9TV49">
    <property type="glycosylation" value="2 sites, No reported glycans"/>
</dbReference>
<dbReference type="GO" id="GO:0005737">
    <property type="term" value="C:cytoplasm"/>
    <property type="evidence" value="ECO:0007669"/>
    <property type="project" value="TreeGrafter"/>
</dbReference>
<dbReference type="GO" id="GO:0009897">
    <property type="term" value="C:external side of plasma membrane"/>
    <property type="evidence" value="ECO:0000250"/>
    <property type="project" value="UniProtKB"/>
</dbReference>
<dbReference type="GO" id="GO:0016493">
    <property type="term" value="F:C-C chemokine receptor activity"/>
    <property type="evidence" value="ECO:0000250"/>
    <property type="project" value="UniProtKB"/>
</dbReference>
<dbReference type="GO" id="GO:0071791">
    <property type="term" value="F:chemokine (C-C motif) ligand 5 binding"/>
    <property type="evidence" value="ECO:0007669"/>
    <property type="project" value="TreeGrafter"/>
</dbReference>
<dbReference type="GO" id="GO:0019722">
    <property type="term" value="P:calcium-mediated signaling"/>
    <property type="evidence" value="ECO:0007669"/>
    <property type="project" value="TreeGrafter"/>
</dbReference>
<dbReference type="GO" id="GO:0060326">
    <property type="term" value="P:cell chemotaxis"/>
    <property type="evidence" value="ECO:0007669"/>
    <property type="project" value="TreeGrafter"/>
</dbReference>
<dbReference type="GO" id="GO:0006955">
    <property type="term" value="P:immune response"/>
    <property type="evidence" value="ECO:0007669"/>
    <property type="project" value="InterPro"/>
</dbReference>
<dbReference type="GO" id="GO:0006954">
    <property type="term" value="P:inflammatory response"/>
    <property type="evidence" value="ECO:0007669"/>
    <property type="project" value="InterPro"/>
</dbReference>
<dbReference type="GO" id="GO:0007204">
    <property type="term" value="P:positive regulation of cytosolic calcium ion concentration"/>
    <property type="evidence" value="ECO:0007669"/>
    <property type="project" value="TreeGrafter"/>
</dbReference>
<dbReference type="CDD" id="cd15184">
    <property type="entry name" value="7tmA_CCR5_CCR2"/>
    <property type="match status" value="1"/>
</dbReference>
<dbReference type="FunFam" id="1.20.1070.10:FF:000026">
    <property type="entry name" value="C-C chemokine receptor type 5"/>
    <property type="match status" value="1"/>
</dbReference>
<dbReference type="Gene3D" id="1.20.1070.10">
    <property type="entry name" value="Rhodopsin 7-helix transmembrane proteins"/>
    <property type="match status" value="1"/>
</dbReference>
<dbReference type="InterPro" id="IPR050119">
    <property type="entry name" value="CCR1-9-like"/>
</dbReference>
<dbReference type="InterPro" id="IPR002240">
    <property type="entry name" value="Chemokine_CCR5"/>
</dbReference>
<dbReference type="InterPro" id="IPR000355">
    <property type="entry name" value="Chemokine_rcpt"/>
</dbReference>
<dbReference type="InterPro" id="IPR000276">
    <property type="entry name" value="GPCR_Rhodpsn"/>
</dbReference>
<dbReference type="InterPro" id="IPR017452">
    <property type="entry name" value="GPCR_Rhodpsn_7TM"/>
</dbReference>
<dbReference type="PANTHER" id="PTHR10489:SF686">
    <property type="entry name" value="C-C CHEMOKINE RECEPTOR TYPE 5"/>
    <property type="match status" value="1"/>
</dbReference>
<dbReference type="PANTHER" id="PTHR10489">
    <property type="entry name" value="CELL ADHESION MOLECULE"/>
    <property type="match status" value="1"/>
</dbReference>
<dbReference type="Pfam" id="PF00001">
    <property type="entry name" value="7tm_1"/>
    <property type="match status" value="1"/>
</dbReference>
<dbReference type="PRINTS" id="PR00657">
    <property type="entry name" value="CCCHEMOKINER"/>
</dbReference>
<dbReference type="PRINTS" id="PR01110">
    <property type="entry name" value="CHEMOKINER5"/>
</dbReference>
<dbReference type="PRINTS" id="PR00237">
    <property type="entry name" value="GPCRRHODOPSN"/>
</dbReference>
<dbReference type="SUPFAM" id="SSF81321">
    <property type="entry name" value="Family A G protein-coupled receptor-like"/>
    <property type="match status" value="1"/>
</dbReference>
<dbReference type="PROSITE" id="PS00237">
    <property type="entry name" value="G_PROTEIN_RECEP_F1_1"/>
    <property type="match status" value="1"/>
</dbReference>
<dbReference type="PROSITE" id="PS50262">
    <property type="entry name" value="G_PROTEIN_RECEP_F1_2"/>
    <property type="match status" value="1"/>
</dbReference>
<protein>
    <recommendedName>
        <fullName>C-C chemokine receptor type 5</fullName>
        <shortName>C-C CKR-5</shortName>
        <shortName>CC-CKR-5</shortName>
        <shortName>CCR-5</shortName>
        <shortName>CCR5</shortName>
    </recommendedName>
    <cdAntigenName>CD195</cdAntigenName>
</protein>
<accession>Q9TV49</accession>
<name>CCR5_CERGA</name>
<feature type="chain" id="PRO_0000253616" description="C-C chemokine receptor type 5">
    <location>
        <begin position="1"/>
        <end position="352"/>
    </location>
</feature>
<feature type="topological domain" description="Extracellular" evidence="3">
    <location>
        <begin position="1"/>
        <end position="30"/>
    </location>
</feature>
<feature type="transmembrane region" description="Helical; Name=1" evidence="3">
    <location>
        <begin position="31"/>
        <end position="58"/>
    </location>
</feature>
<feature type="topological domain" description="Cytoplasmic" evidence="3">
    <location>
        <begin position="59"/>
        <end position="68"/>
    </location>
</feature>
<feature type="transmembrane region" description="Helical; Name=2" evidence="3">
    <location>
        <begin position="69"/>
        <end position="89"/>
    </location>
</feature>
<feature type="topological domain" description="Extracellular" evidence="3">
    <location>
        <begin position="90"/>
        <end position="102"/>
    </location>
</feature>
<feature type="transmembrane region" description="Helical; Name=3" evidence="3">
    <location>
        <begin position="103"/>
        <end position="124"/>
    </location>
</feature>
<feature type="topological domain" description="Cytoplasmic" evidence="3">
    <location>
        <begin position="125"/>
        <end position="141"/>
    </location>
</feature>
<feature type="transmembrane region" description="Helical; Name=4" evidence="3">
    <location>
        <begin position="142"/>
        <end position="166"/>
    </location>
</feature>
<feature type="topological domain" description="Extracellular" evidence="3">
    <location>
        <begin position="167"/>
        <end position="198"/>
    </location>
</feature>
<feature type="transmembrane region" description="Helical; Name=5" evidence="3">
    <location>
        <begin position="199"/>
        <end position="218"/>
    </location>
</feature>
<feature type="topological domain" description="Cytoplasmic" evidence="3">
    <location>
        <begin position="219"/>
        <end position="235"/>
    </location>
</feature>
<feature type="transmembrane region" description="Helical; Name=6" evidence="3">
    <location>
        <begin position="236"/>
        <end position="260"/>
    </location>
</feature>
<feature type="topological domain" description="Extracellular" evidence="3">
    <location>
        <begin position="261"/>
        <end position="277"/>
    </location>
</feature>
<feature type="transmembrane region" description="Helical; Name=7" evidence="3">
    <location>
        <begin position="278"/>
        <end position="301"/>
    </location>
</feature>
<feature type="topological domain" description="Cytoplasmic" evidence="3">
    <location>
        <begin position="302"/>
        <end position="352"/>
    </location>
</feature>
<feature type="modified residue" description="Sulfotyrosine" evidence="1">
    <location>
        <position position="3"/>
    </location>
</feature>
<feature type="modified residue" description="Sulfotyrosine" evidence="3">
    <location>
        <position position="10"/>
    </location>
</feature>
<feature type="modified residue" description="Sulfotyrosine" evidence="3">
    <location>
        <position position="14"/>
    </location>
</feature>
<feature type="modified residue" description="Sulfotyrosine" evidence="3">
    <location>
        <position position="15"/>
    </location>
</feature>
<feature type="modified residue" description="Phosphoserine; by BARK1" evidence="1">
    <location>
        <position position="336"/>
    </location>
</feature>
<feature type="modified residue" description="Phosphoserine; by BARK1" evidence="1">
    <location>
        <position position="337"/>
    </location>
</feature>
<feature type="modified residue" description="Phosphoserine; by BARK1" evidence="1">
    <location>
        <position position="342"/>
    </location>
</feature>
<feature type="modified residue" description="Phosphoserine; by BARK1" evidence="1">
    <location>
        <position position="349"/>
    </location>
</feature>
<feature type="lipid moiety-binding region" description="S-palmitoyl cysteine" evidence="1">
    <location>
        <position position="321"/>
    </location>
</feature>
<feature type="lipid moiety-binding region" description="S-palmitoyl cysteine" evidence="1">
    <location>
        <position position="323"/>
    </location>
</feature>
<feature type="lipid moiety-binding region" description="S-palmitoyl cysteine" evidence="1">
    <location>
        <position position="324"/>
    </location>
</feature>
<feature type="glycosylation site" description="O-linked (GalNAc...) serine" evidence="1">
    <location>
        <position position="6"/>
    </location>
</feature>
<feature type="glycosylation site" description="O-linked (GalNAc...) serine" evidence="1">
    <location>
        <position position="7"/>
    </location>
</feature>
<feature type="disulfide bond" evidence="1">
    <location>
        <begin position="20"/>
        <end position="269"/>
    </location>
</feature>
<feature type="disulfide bond" evidence="4">
    <location>
        <begin position="101"/>
        <end position="178"/>
    </location>
</feature>